<keyword id="KW-0479">Metal-binding</keyword>
<keyword id="KW-0520">NAD</keyword>
<keyword id="KW-0560">Oxidoreductase</keyword>
<keyword id="KW-0862">Zinc</keyword>
<comment type="function">
    <text evidence="1">Oxidizes mannitol to mannose. Provides the initial step by which translocated mannitol is committed to central metabolism and, by regulating mannitol pool size, is important in regulating salt tolerance at the cellular level (By similarity).</text>
</comment>
<comment type="catalytic activity">
    <reaction>
        <text>D-mannitol + NAD(+) = D-mannose + NADH + H(+)</text>
        <dbReference type="Rhea" id="RHEA:15029"/>
        <dbReference type="ChEBI" id="CHEBI:4208"/>
        <dbReference type="ChEBI" id="CHEBI:15378"/>
        <dbReference type="ChEBI" id="CHEBI:16899"/>
        <dbReference type="ChEBI" id="CHEBI:57540"/>
        <dbReference type="ChEBI" id="CHEBI:57945"/>
        <dbReference type="EC" id="1.1.1.255"/>
    </reaction>
</comment>
<comment type="cofactor">
    <cofactor evidence="1">
        <name>Zn(2+)</name>
        <dbReference type="ChEBI" id="CHEBI:29105"/>
    </cofactor>
    <text evidence="1">Binds 2 Zn(2+) ions per subunit.</text>
</comment>
<comment type="similarity">
    <text evidence="2">Belongs to the zinc-containing alcohol dehydrogenase family.</text>
</comment>
<comment type="caution">
    <text evidence="2">Was originally (Ref.1) thought to be a cinnamyl-alcohol dehydrogenase.</text>
</comment>
<protein>
    <recommendedName>
        <fullName>Probable mannitol dehydrogenase 1</fullName>
        <ecNumber>1.1.1.255</ecNumber>
    </recommendedName>
    <alternativeName>
        <fullName>NAD-dependent mannitol dehydrogenase 1</fullName>
    </alternativeName>
</protein>
<reference key="1">
    <citation type="submission" date="1994-11" db="EMBL/GenBank/DDBJ databases">
        <authorList>
            <person name="Nourse J.P."/>
            <person name="Manners J.M."/>
            <person name="Curtis M.D."/>
            <person name="Abrahams S.L."/>
            <person name="Watson J.M."/>
        </authorList>
    </citation>
    <scope>NUCLEOTIDE SEQUENCE [MRNA]</scope>
    <source>
        <strain>cv. Paterson</strain>
        <tissue>Stem</tissue>
    </source>
</reference>
<organism>
    <name type="scientific">Stylosanthes humilis</name>
    <name type="common">Townsville stylo</name>
    <name type="synonym">Astyposanthes humilis</name>
    <dbReference type="NCBI Taxonomy" id="35628"/>
    <lineage>
        <taxon>Eukaryota</taxon>
        <taxon>Viridiplantae</taxon>
        <taxon>Streptophyta</taxon>
        <taxon>Embryophyta</taxon>
        <taxon>Tracheophyta</taxon>
        <taxon>Spermatophyta</taxon>
        <taxon>Magnoliopsida</taxon>
        <taxon>eudicotyledons</taxon>
        <taxon>Gunneridae</taxon>
        <taxon>Pentapetalae</taxon>
        <taxon>rosids</taxon>
        <taxon>fabids</taxon>
        <taxon>Fabales</taxon>
        <taxon>Fabaceae</taxon>
        <taxon>Papilionoideae</taxon>
        <taxon>50 kb inversion clade</taxon>
        <taxon>dalbergioids sensu lato</taxon>
        <taxon>Dalbergieae</taxon>
        <taxon>Pterocarpus clade</taxon>
        <taxon>Stylosanthes</taxon>
    </lineage>
</organism>
<sequence length="354" mass="38130">MASSKAFGWAAKDASGHLSPFHFTRRQNEADDVTLKILYCGVCHSDLHTVKNDWGFTTYPVVPGHEIAGIVTKVGSNVTKFKEGDRVGVGVIVDSCQECECCQQDLESYCPKPVFTYNSPYKGTRTQGGYSDFVVVHQRFVLQFPDNLPLDAGAPLLCAGITVYSPMKYYGMTEPGKHLGVAGLGGLGHVAIKFGKAFGLKVTVISSSPNKESEAIDVLGADSFLLSSDPEKMKAATGTMDYIIDTISAVHSLVSLLGLLKLNGKLVTVGLPSKPLQLPIFPLVAGRKLIGGSNFGGLKETQEMLDFCGKHNIAANIELIKMDEINTAIERLSKADVKYRFVIDVANSLSSSNM</sequence>
<proteinExistence type="evidence at transcript level"/>
<gene>
    <name type="primary">CAD1</name>
</gene>
<name>MTDH1_STYHU</name>
<accession>Q43137</accession>
<dbReference type="EC" id="1.1.1.255"/>
<dbReference type="EMBL" id="L36823">
    <property type="protein sequence ID" value="AAA74882.1"/>
    <property type="molecule type" value="mRNA"/>
</dbReference>
<dbReference type="SMR" id="Q43137"/>
<dbReference type="GO" id="GO:0046029">
    <property type="term" value="F:mannitol dehydrogenase activity"/>
    <property type="evidence" value="ECO:0007669"/>
    <property type="project" value="UniProtKB-EC"/>
</dbReference>
<dbReference type="GO" id="GO:0008270">
    <property type="term" value="F:zinc ion binding"/>
    <property type="evidence" value="ECO:0007669"/>
    <property type="project" value="InterPro"/>
</dbReference>
<dbReference type="GO" id="GO:0009809">
    <property type="term" value="P:lignin biosynthetic process"/>
    <property type="evidence" value="ECO:0007669"/>
    <property type="project" value="UniProtKB-ARBA"/>
</dbReference>
<dbReference type="CDD" id="cd05283">
    <property type="entry name" value="CAD1"/>
    <property type="match status" value="1"/>
</dbReference>
<dbReference type="FunFam" id="3.40.50.720:FF:000022">
    <property type="entry name" value="Cinnamyl alcohol dehydrogenase"/>
    <property type="match status" value="1"/>
</dbReference>
<dbReference type="FunFam" id="3.90.180.10:FF:000004">
    <property type="entry name" value="probable cinnamyl alcohol dehydrogenase"/>
    <property type="match status" value="1"/>
</dbReference>
<dbReference type="FunFam" id="3.90.180.10:FF:000100">
    <property type="entry name" value="Putative cinnamyl alcohol dehydrogenase 6"/>
    <property type="match status" value="1"/>
</dbReference>
<dbReference type="Gene3D" id="3.90.180.10">
    <property type="entry name" value="Medium-chain alcohol dehydrogenases, catalytic domain"/>
    <property type="match status" value="1"/>
</dbReference>
<dbReference type="Gene3D" id="3.40.50.720">
    <property type="entry name" value="NAD(P)-binding Rossmann-like Domain"/>
    <property type="match status" value="1"/>
</dbReference>
<dbReference type="InterPro" id="IPR013149">
    <property type="entry name" value="ADH-like_C"/>
</dbReference>
<dbReference type="InterPro" id="IPR013154">
    <property type="entry name" value="ADH-like_N"/>
</dbReference>
<dbReference type="InterPro" id="IPR002328">
    <property type="entry name" value="ADH_Zn_CS"/>
</dbReference>
<dbReference type="InterPro" id="IPR047109">
    <property type="entry name" value="CAD-like"/>
</dbReference>
<dbReference type="InterPro" id="IPR011032">
    <property type="entry name" value="GroES-like_sf"/>
</dbReference>
<dbReference type="InterPro" id="IPR036291">
    <property type="entry name" value="NAD(P)-bd_dom_sf"/>
</dbReference>
<dbReference type="InterPro" id="IPR020843">
    <property type="entry name" value="PKS_ER"/>
</dbReference>
<dbReference type="PANTHER" id="PTHR42683">
    <property type="entry name" value="ALDEHYDE REDUCTASE"/>
    <property type="match status" value="1"/>
</dbReference>
<dbReference type="Pfam" id="PF08240">
    <property type="entry name" value="ADH_N"/>
    <property type="match status" value="1"/>
</dbReference>
<dbReference type="Pfam" id="PF00107">
    <property type="entry name" value="ADH_zinc_N"/>
    <property type="match status" value="1"/>
</dbReference>
<dbReference type="SMART" id="SM00829">
    <property type="entry name" value="PKS_ER"/>
    <property type="match status" value="1"/>
</dbReference>
<dbReference type="SUPFAM" id="SSF50129">
    <property type="entry name" value="GroES-like"/>
    <property type="match status" value="1"/>
</dbReference>
<dbReference type="SUPFAM" id="SSF51735">
    <property type="entry name" value="NAD(P)-binding Rossmann-fold domains"/>
    <property type="match status" value="1"/>
</dbReference>
<dbReference type="PROSITE" id="PS00059">
    <property type="entry name" value="ADH_ZINC"/>
    <property type="match status" value="1"/>
</dbReference>
<evidence type="ECO:0000250" key="1"/>
<evidence type="ECO:0000305" key="2"/>
<feature type="chain" id="PRO_0000160815" description="Probable mannitol dehydrogenase 1">
    <location>
        <begin position="1"/>
        <end position="354"/>
    </location>
</feature>
<feature type="binding site" evidence="1">
    <location>
        <position position="43"/>
    </location>
    <ligand>
        <name>Zn(2+)</name>
        <dbReference type="ChEBI" id="CHEBI:29105"/>
        <label>1</label>
        <note>catalytic</note>
    </ligand>
</feature>
<feature type="binding site" evidence="1">
    <location>
        <position position="65"/>
    </location>
    <ligand>
        <name>Zn(2+)</name>
        <dbReference type="ChEBI" id="CHEBI:29105"/>
        <label>1</label>
        <note>catalytic</note>
    </ligand>
</feature>
<feature type="binding site" evidence="1">
    <location>
        <position position="96"/>
    </location>
    <ligand>
        <name>Zn(2+)</name>
        <dbReference type="ChEBI" id="CHEBI:29105"/>
        <label>2</label>
    </ligand>
</feature>
<feature type="binding site" evidence="1">
    <location>
        <position position="99"/>
    </location>
    <ligand>
        <name>Zn(2+)</name>
        <dbReference type="ChEBI" id="CHEBI:29105"/>
        <label>2</label>
    </ligand>
</feature>
<feature type="binding site" evidence="1">
    <location>
        <position position="102"/>
    </location>
    <ligand>
        <name>Zn(2+)</name>
        <dbReference type="ChEBI" id="CHEBI:29105"/>
        <label>2</label>
    </ligand>
</feature>
<feature type="binding site" evidence="1">
    <location>
        <position position="110"/>
    </location>
    <ligand>
        <name>Zn(2+)</name>
        <dbReference type="ChEBI" id="CHEBI:29105"/>
        <label>2</label>
    </ligand>
</feature>
<feature type="binding site" evidence="1">
    <location>
        <position position="158"/>
    </location>
    <ligand>
        <name>Zn(2+)</name>
        <dbReference type="ChEBI" id="CHEBI:29105"/>
        <label>1</label>
        <note>catalytic</note>
    </ligand>
</feature>